<reference key="1">
    <citation type="journal article" date="1991" name="J. Bacteriol.">
        <title>Nucleotide sequence and expression analysis of the Acetobacter xylinum uridine diphosphoglucose pyrophosphorylase gene.</title>
        <authorList>
            <person name="Brede G."/>
            <person name="Fjaervik E."/>
            <person name="Valla S."/>
        </authorList>
    </citation>
    <scope>NUCLEOTIDE SEQUENCE [GENOMIC DNA]</scope>
</reference>
<organism>
    <name type="scientific">Komagataeibacter xylinus</name>
    <name type="common">Gluconacetobacter xylinus</name>
    <dbReference type="NCBI Taxonomy" id="28448"/>
    <lineage>
        <taxon>Bacteria</taxon>
        <taxon>Pseudomonadati</taxon>
        <taxon>Pseudomonadota</taxon>
        <taxon>Alphaproteobacteria</taxon>
        <taxon>Acetobacterales</taxon>
        <taxon>Acetobacteraceae</taxon>
        <taxon>Komagataeibacter</taxon>
    </lineage>
</organism>
<dbReference type="EC" id="2.7.7.9"/>
<dbReference type="EMBL" id="M76548">
    <property type="protein sequence ID" value="AAA21888.1"/>
    <property type="molecule type" value="Genomic_DNA"/>
</dbReference>
<dbReference type="PIR" id="A41382">
    <property type="entry name" value="A41382"/>
</dbReference>
<dbReference type="SMR" id="P27897"/>
<dbReference type="STRING" id="1220579.GCA_001571345_00462"/>
<dbReference type="GO" id="GO:0003983">
    <property type="term" value="F:UTP:glucose-1-phosphate uridylyltransferase activity"/>
    <property type="evidence" value="ECO:0007669"/>
    <property type="project" value="UniProtKB-EC"/>
</dbReference>
<dbReference type="GO" id="GO:0009058">
    <property type="term" value="P:biosynthetic process"/>
    <property type="evidence" value="ECO:0007669"/>
    <property type="project" value="InterPro"/>
</dbReference>
<dbReference type="GO" id="GO:0006011">
    <property type="term" value="P:UDP-alpha-D-glucose metabolic process"/>
    <property type="evidence" value="ECO:0007669"/>
    <property type="project" value="InterPro"/>
</dbReference>
<dbReference type="CDD" id="cd02541">
    <property type="entry name" value="UGPase_prokaryotic"/>
    <property type="match status" value="1"/>
</dbReference>
<dbReference type="Gene3D" id="3.90.550.10">
    <property type="entry name" value="Spore Coat Polysaccharide Biosynthesis Protein SpsA, Chain A"/>
    <property type="match status" value="1"/>
</dbReference>
<dbReference type="InterPro" id="IPR005771">
    <property type="entry name" value="GalU_uridylyltTrfase_bac/arc"/>
</dbReference>
<dbReference type="InterPro" id="IPR005835">
    <property type="entry name" value="NTP_transferase_dom"/>
</dbReference>
<dbReference type="InterPro" id="IPR029044">
    <property type="entry name" value="Nucleotide-diphossugar_trans"/>
</dbReference>
<dbReference type="PANTHER" id="PTHR43197">
    <property type="entry name" value="UTP--GLUCOSE-1-PHOSPHATE URIDYLYLTRANSFERASE"/>
    <property type="match status" value="1"/>
</dbReference>
<dbReference type="PANTHER" id="PTHR43197:SF1">
    <property type="entry name" value="UTP--GLUCOSE-1-PHOSPHATE URIDYLYLTRANSFERASE"/>
    <property type="match status" value="1"/>
</dbReference>
<dbReference type="Pfam" id="PF00483">
    <property type="entry name" value="NTP_transferase"/>
    <property type="match status" value="1"/>
</dbReference>
<dbReference type="SUPFAM" id="SSF53448">
    <property type="entry name" value="Nucleotide-diphospho-sugar transferases"/>
    <property type="match status" value="1"/>
</dbReference>
<evidence type="ECO:0000305" key="1"/>
<feature type="chain" id="PRO_0000201346" description="UTP--glucose-1-phosphate uridylyltransferase">
    <location>
        <begin position="1"/>
        <end position="284"/>
    </location>
</feature>
<comment type="catalytic activity">
    <reaction>
        <text>alpha-D-glucose 1-phosphate + UTP + H(+) = UDP-alpha-D-glucose + diphosphate</text>
        <dbReference type="Rhea" id="RHEA:19889"/>
        <dbReference type="ChEBI" id="CHEBI:15378"/>
        <dbReference type="ChEBI" id="CHEBI:33019"/>
        <dbReference type="ChEBI" id="CHEBI:46398"/>
        <dbReference type="ChEBI" id="CHEBI:58601"/>
        <dbReference type="ChEBI" id="CHEBI:58885"/>
        <dbReference type="EC" id="2.7.7.9"/>
    </reaction>
</comment>
<comment type="similarity">
    <text evidence="1">Belongs to the UDPGP type 2 family.</text>
</comment>
<protein>
    <recommendedName>
        <fullName>UTP--glucose-1-phosphate uridylyltransferase</fullName>
        <ecNumber>2.7.7.9</ecNumber>
    </recommendedName>
    <alternativeName>
        <fullName>Alpha-D-glucosyl-1-phosphate uridylyltransferase</fullName>
    </alternativeName>
    <alternativeName>
        <fullName>UDP-glucose pyrophosphorylase</fullName>
        <shortName>UDPGP</shortName>
    </alternativeName>
    <alternativeName>
        <fullName>Uridine diphosphoglucose pyrophosphorylase</fullName>
    </alternativeName>
</protein>
<accession>P27897</accession>
<sequence>MIKPLKKAVLPVAGLGTRFLPATKCVPKEMLTVVDRPLIQYAIDEAREAGIEEFCLVSSRGKDSLIDYFDISYELEDTLKARKKTSALKALEATRVIPGTMLSVPPAGTAGPWHAIWCAREFIGNDPFAILLPDDVVQSKKSCIGQLVEVYNKTGGNVLAVTEVPREQTGSYGILDVGKDDGKTVEVKGLVEKPDPKDAPSTLSVIGRYVLTADVLKHLAKLEKGAGGEVQLTDAMAKTIGHVPFHGYRYEGKRFDCGSKIASWKPRSPLRWSVRNWLPACVNS</sequence>
<keyword id="KW-0548">Nucleotidyltransferase</keyword>
<keyword id="KW-0808">Transferase</keyword>
<gene>
    <name type="primary">celA</name>
</gene>
<proteinExistence type="inferred from homology"/>
<name>CELA_KOMXY</name>